<proteinExistence type="evidence at transcript level"/>
<reference key="1">
    <citation type="submission" date="2002-04" db="EMBL/GenBank/DDBJ databases">
        <title>Isolation and characterization of cDNA for macaque neurological disease genes.</title>
        <authorList>
            <person name="Kusuda J."/>
            <person name="Osada N."/>
            <person name="Hida M."/>
            <person name="Sugano S."/>
            <person name="Hashimoto K."/>
        </authorList>
    </citation>
    <scope>NUCLEOTIDE SEQUENCE [LARGE SCALE MRNA]</scope>
    <source>
        <tissue>Frontal cortex</tissue>
    </source>
</reference>
<organism>
    <name type="scientific">Macaca fascicularis</name>
    <name type="common">Crab-eating macaque</name>
    <name type="synonym">Cynomolgus monkey</name>
    <dbReference type="NCBI Taxonomy" id="9541"/>
    <lineage>
        <taxon>Eukaryota</taxon>
        <taxon>Metazoa</taxon>
        <taxon>Chordata</taxon>
        <taxon>Craniata</taxon>
        <taxon>Vertebrata</taxon>
        <taxon>Euteleostomi</taxon>
        <taxon>Mammalia</taxon>
        <taxon>Eutheria</taxon>
        <taxon>Euarchontoglires</taxon>
        <taxon>Primates</taxon>
        <taxon>Haplorrhini</taxon>
        <taxon>Catarrhini</taxon>
        <taxon>Cercopithecidae</taxon>
        <taxon>Cercopithecinae</taxon>
        <taxon>Macaca</taxon>
    </lineage>
</organism>
<sequence length="410" mass="46700">MVLSQRQRDELNRAIADYLRSNGYEEAYSVFKKEAELDMNEELDKKYAGLLEKKWTSVIRLQKKVMELESKLNEAKEEFTSGGPLGQKRDPKEWIPRPPEKYALSGHRSPVTRVIFHPVFSVMVSASEDATIKVWDYETGDFERTLKGHTDSVQDISFDHSGKLLTSCSADMTIKLWDFQGFECIRTMHGHDHNVSSVAIMPNGDHLVSASRDKTIKMWEVQTGYCVKTFTGHREWVRMVRPNQDGTLIASCSNDQTVRVWVVATKECKAELREHEHVVECISWAPESSYSSISEATGSETKKSGKPGPFLLSGSRDKTIKMWDVSTGMCLMTLVGHDNWVRGVLFHSGGKFILSCADDKTLRVWDYKNKRCMKTLNAHEHFVTSLDFHKTAPYVVTGSVDQTVKVWECR</sequence>
<gene>
    <name evidence="2 7" type="primary">PAFAH1B1</name>
    <name evidence="7" type="synonym">LIS1</name>
    <name type="synonym">PAFAHA</name>
    <name type="ORF">QflA-10848</name>
</gene>
<comment type="function">
    <text evidence="1 2 3 7">Regulatory subunit (beta subunit) of the cytosolic type I platelet-activating factor (PAF) acetylhydrolase (PAF-AH (I)), an enzyme that catalyzes the hydrolyze of the acetyl group at the sn-2 position of PAF and its analogs and participates in PAF inactivation. Regulates the PAF-AH (I) activity in a catalytic dimer composition-dependent manner (By similarity). Positively regulates the activity of the minus-end directed microtubule motor protein dynein. May enhance dynein-mediated microtubule sliding by targeting dynein to the microtubule plus end. Required for several dynein- and microtubule-dependent processes such as the maintenance of Golgi integrity, the peripheral transport of microtubule fragments and the coupling of the nucleus and centrosome. Required during brain development for the proliferation of neuronal precursors and the migration of newly formed neurons from the ventricular/subventricular zone toward the cortical plate. Neuronal migration involves a process called nucleokinesis, whereby migrating cells extend an anterior process into which the nucleus subsequently translocates. During nucleokinesis dynein at the nuclear surface may translocate the nucleus towards the centrosome by exerting force on centrosomal microtubules. Also required for proper activation of Rho GTPases and actin polymerization at the leading edge of locomoting cerebellar neurons and postmigratory hippocampal neurons in response to calcium influx triggered via NMDA receptors. May also play a role in other forms of cell locomotion including the migration of fibroblasts during wound healing. Required for dynein recruitment to microtubule plus ends and BICD2-bound cargos. May modulate the Reelin pathway through interaction of the PAF-AH (I) catalytic dimer with VLDLR (By similarity).</text>
</comment>
<comment type="subunit">
    <text evidence="1 2 7">Can self-associate. Component of the cytosolic PAF-AH (I) heterotetrameric enzyme, which is composed of PAFAH1B1 (beta), PAFAH1B2 (alpha2) and PAFAH1B3 (alpha1) subunits. The catalytic activity of the enzyme resides in the alpha1 (PAFAH1B3) and alpha2 (PAFAH1B2) subunits, whereas the beta subunit (PAFAH1B1) has regulatory activity. Trimer formation is not essential for the catalytic activity. Interacts with the catalytic dimer of PAF-AH (I) heterotetrameric enzyme: interacts with PAFAH1B2 homodimer (alpha2/alpha2 homodimer), PAFAH1B3 homodimer (alpha1/alpha1 homodimer) and PAFAH1B2-PAFAH1B3 heterodimer (alpha2/alpha1 heterodimer) (By similarity). Interacts with DCX, dynein, dynactin, IQGAP1, KATNB1, NDE1, NDEL1, NUDC and RSN. Interacts with DISC1, and this interaction is enhanced by NDEL1. Interacts with DAB1 when DAB1 is phosphorylated in response to RELN/reelin signaling. Interacts with INTS13. Interacts with DCDC1.</text>
</comment>
<comment type="subcellular location">
    <subcellularLocation>
        <location evidence="7">Cytoplasm</location>
        <location evidence="7">Cytoskeleton</location>
    </subcellularLocation>
    <subcellularLocation>
        <location evidence="7">Cytoplasm</location>
        <location evidence="7">Cytoskeleton</location>
        <location evidence="7">Microtubule organizing center</location>
        <location evidence="7">Centrosome</location>
    </subcellularLocation>
    <subcellularLocation>
        <location evidence="7">Cytoplasm</location>
        <location evidence="7">Cytoskeleton</location>
        <location evidence="7">Spindle</location>
    </subcellularLocation>
    <subcellularLocation>
        <location evidence="7">Nucleus membrane</location>
    </subcellularLocation>
    <text evidence="7">Localizes to the plus end of microtubules and to the centrosome. May localize to the nuclear membrane. Redistributes to axons during neuronal development. Also localizes to the microtubules of the manchette in elongating spermatids and to the meiotic spindle in spermatocytes.</text>
</comment>
<comment type="domain">
    <text evidence="7">Dimerization mediated by the LisH domain may be required to activate dynein.</text>
</comment>
<comment type="miscellaneous">
    <text evidence="2 4 5 6">Originally the subunits of the type I platelet-activating factor (PAF) acetylhydrolase was named alpha (PAFAH1B1), beta (PAFAH1B2) and gamma (PAFAH1B3) (By similarity). Now these subunits have been renamed beta (PAFAH1B1), alpha2 (PAFAH1B2) and alpha1 (PAFAH1B3) respectively (By similarity).</text>
</comment>
<comment type="similarity">
    <text evidence="7">Belongs to the WD repeat LIS1/nudF family.</text>
</comment>
<evidence type="ECO:0000250" key="1">
    <source>
        <dbReference type="UniProtKB" id="P43033"/>
    </source>
</evidence>
<evidence type="ECO:0000250" key="2">
    <source>
        <dbReference type="UniProtKB" id="P43034"/>
    </source>
</evidence>
<evidence type="ECO:0000250" key="3">
    <source>
        <dbReference type="UniProtKB" id="P63005"/>
    </source>
</evidence>
<evidence type="ECO:0000250" key="4">
    <source>
        <dbReference type="UniProtKB" id="P68402"/>
    </source>
</evidence>
<evidence type="ECO:0000250" key="5">
    <source>
        <dbReference type="UniProtKB" id="Q15102"/>
    </source>
</evidence>
<evidence type="ECO:0000250" key="6">
    <source>
        <dbReference type="UniProtKB" id="Q29460"/>
    </source>
</evidence>
<evidence type="ECO:0000255" key="7">
    <source>
        <dbReference type="HAMAP-Rule" id="MF_03141"/>
    </source>
</evidence>
<name>LIS1_MACFA</name>
<feature type="chain" id="PRO_0000051062" description="Platelet-activating factor acetylhydrolase IB subunit alpha">
    <location>
        <begin position="1"/>
        <end position="410"/>
    </location>
</feature>
<feature type="domain" description="LisH" evidence="7">
    <location>
        <begin position="7"/>
        <end position="39"/>
    </location>
</feature>
<feature type="repeat" description="WD 1">
    <location>
        <begin position="106"/>
        <end position="147"/>
    </location>
</feature>
<feature type="repeat" description="WD 2">
    <location>
        <begin position="148"/>
        <end position="187"/>
    </location>
</feature>
<feature type="repeat" description="WD 3">
    <location>
        <begin position="190"/>
        <end position="229"/>
    </location>
</feature>
<feature type="repeat" description="WD 4">
    <location>
        <begin position="232"/>
        <end position="271"/>
    </location>
</feature>
<feature type="repeat" description="WD 5">
    <location>
        <begin position="274"/>
        <end position="333"/>
    </location>
</feature>
<feature type="repeat" description="WD 6">
    <location>
        <begin position="336"/>
        <end position="377"/>
    </location>
</feature>
<feature type="repeat" description="WD 7">
    <location>
        <begin position="378"/>
        <end position="410"/>
    </location>
</feature>
<feature type="region of interest" description="Interaction with NDEL1" evidence="7">
    <location>
        <begin position="1"/>
        <end position="102"/>
    </location>
</feature>
<feature type="region of interest" description="Interaction with NDE1" evidence="7">
    <location>
        <begin position="1"/>
        <end position="66"/>
    </location>
</feature>
<feature type="region of interest" description="Required for self-association and interaction with PAFAH1B2 and PAFAH1B3" evidence="7">
    <location>
        <begin position="1"/>
        <end position="38"/>
    </location>
</feature>
<feature type="region of interest" description="Interaction with dynein and dynactin" evidence="7">
    <location>
        <begin position="83"/>
        <end position="410"/>
    </location>
</feature>
<feature type="region of interest" description="Interaction with DCX" evidence="7">
    <location>
        <begin position="367"/>
        <end position="409"/>
    </location>
</feature>
<feature type="region of interest" description="Interaction with NDEL1" evidence="7">
    <location>
        <begin position="388"/>
        <end position="410"/>
    </location>
</feature>
<feature type="coiled-coil region" evidence="7">
    <location>
        <begin position="56"/>
        <end position="82"/>
    </location>
</feature>
<feature type="modified residue" description="N6-acetyllysine" evidence="2">
    <location>
        <position position="53"/>
    </location>
</feature>
<feature type="modified residue" description="Phosphoserine" evidence="2">
    <location>
        <position position="109"/>
    </location>
</feature>
<accession>Q8HXX0</accession>
<dbReference type="EMBL" id="AB083321">
    <property type="protein sequence ID" value="BAC20600.1"/>
    <property type="molecule type" value="mRNA"/>
</dbReference>
<dbReference type="RefSeq" id="XP_005582540.1">
    <property type="nucleotide sequence ID" value="XM_005582483.3"/>
</dbReference>
<dbReference type="RefSeq" id="XP_065388653.1">
    <property type="nucleotide sequence ID" value="XM_065532581.1"/>
</dbReference>
<dbReference type="RefSeq" id="XP_065388654.1">
    <property type="nucleotide sequence ID" value="XM_065532582.1"/>
</dbReference>
<dbReference type="SMR" id="Q8HXX0"/>
<dbReference type="STRING" id="9541.ENSMFAP00000013413"/>
<dbReference type="Ensembl" id="ENSMFAT00000062929.2">
    <property type="protein sequence ID" value="ENSMFAP00000013349.1"/>
    <property type="gene ID" value="ENSMFAG00000025892.2"/>
</dbReference>
<dbReference type="GeneID" id="101866353"/>
<dbReference type="CTD" id="5048"/>
<dbReference type="VEuPathDB" id="HostDB:ENSMFAG00000025892"/>
<dbReference type="eggNOG" id="KOG0295">
    <property type="taxonomic scope" value="Eukaryota"/>
</dbReference>
<dbReference type="GeneTree" id="ENSGT00940000155039"/>
<dbReference type="OMA" id="WHVATKE"/>
<dbReference type="OrthoDB" id="622at314294"/>
<dbReference type="Proteomes" id="UP000233100">
    <property type="component" value="Chromosome 16"/>
</dbReference>
<dbReference type="Bgee" id="ENSMFAG00000025892">
    <property type="expression patterns" value="Expressed in temporal lobe and 13 other cell types or tissues"/>
</dbReference>
<dbReference type="GO" id="GO:0008247">
    <property type="term" value="C:1-alkyl-2-acetylglycerophosphocholine esterase complex"/>
    <property type="evidence" value="ECO:0000250"/>
    <property type="project" value="UniProtKB"/>
</dbReference>
<dbReference type="GO" id="GO:0000235">
    <property type="term" value="C:astral microtubule"/>
    <property type="evidence" value="ECO:0007669"/>
    <property type="project" value="Ensembl"/>
</dbReference>
<dbReference type="GO" id="GO:0005938">
    <property type="term" value="C:cell cortex"/>
    <property type="evidence" value="ECO:0007669"/>
    <property type="project" value="Ensembl"/>
</dbReference>
<dbReference type="GO" id="GO:0005813">
    <property type="term" value="C:centrosome"/>
    <property type="evidence" value="ECO:0007669"/>
    <property type="project" value="UniProtKB-SubCell"/>
</dbReference>
<dbReference type="GO" id="GO:0000776">
    <property type="term" value="C:kinetochore"/>
    <property type="evidence" value="ECO:0007669"/>
    <property type="project" value="Ensembl"/>
</dbReference>
<dbReference type="GO" id="GO:0005875">
    <property type="term" value="C:microtubule associated complex"/>
    <property type="evidence" value="ECO:0007669"/>
    <property type="project" value="UniProtKB-UniRule"/>
</dbReference>
<dbReference type="GO" id="GO:0031965">
    <property type="term" value="C:nuclear membrane"/>
    <property type="evidence" value="ECO:0007669"/>
    <property type="project" value="UniProtKB-SubCell"/>
</dbReference>
<dbReference type="GO" id="GO:0070840">
    <property type="term" value="F:dynein complex binding"/>
    <property type="evidence" value="ECO:0007669"/>
    <property type="project" value="UniProtKB-UniRule"/>
</dbReference>
<dbReference type="GO" id="GO:0046982">
    <property type="term" value="F:protein heterodimerization activity"/>
    <property type="evidence" value="ECO:0000250"/>
    <property type="project" value="UniProtKB"/>
</dbReference>
<dbReference type="GO" id="GO:0008344">
    <property type="term" value="P:adult locomotory behavior"/>
    <property type="evidence" value="ECO:0007669"/>
    <property type="project" value="Ensembl"/>
</dbReference>
<dbReference type="GO" id="GO:0048854">
    <property type="term" value="P:brain morphogenesis"/>
    <property type="evidence" value="ECO:0007669"/>
    <property type="project" value="Ensembl"/>
</dbReference>
<dbReference type="GO" id="GO:0051301">
    <property type="term" value="P:cell division"/>
    <property type="evidence" value="ECO:0007669"/>
    <property type="project" value="UniProtKB-KW"/>
</dbReference>
<dbReference type="GO" id="GO:0021987">
    <property type="term" value="P:cerebral cortex development"/>
    <property type="evidence" value="ECO:0007669"/>
    <property type="project" value="Ensembl"/>
</dbReference>
<dbReference type="GO" id="GO:0021540">
    <property type="term" value="P:corpus callosum morphogenesis"/>
    <property type="evidence" value="ECO:0007669"/>
    <property type="project" value="Ensembl"/>
</dbReference>
<dbReference type="GO" id="GO:0000132">
    <property type="term" value="P:establishment of mitotic spindle orientation"/>
    <property type="evidence" value="ECO:0007669"/>
    <property type="project" value="UniProtKB-UniRule"/>
</dbReference>
<dbReference type="GO" id="GO:0016042">
    <property type="term" value="P:lipid catabolic process"/>
    <property type="evidence" value="ECO:0007669"/>
    <property type="project" value="UniProtKB-KW"/>
</dbReference>
<dbReference type="GO" id="GO:0031023">
    <property type="term" value="P:microtubule organizing center organization"/>
    <property type="evidence" value="ECO:0007669"/>
    <property type="project" value="Ensembl"/>
</dbReference>
<dbReference type="GO" id="GO:0051012">
    <property type="term" value="P:microtubule sliding"/>
    <property type="evidence" value="ECO:0007669"/>
    <property type="project" value="UniProtKB-UniRule"/>
</dbReference>
<dbReference type="GO" id="GO:0050885">
    <property type="term" value="P:neuromuscular process controlling balance"/>
    <property type="evidence" value="ECO:0007669"/>
    <property type="project" value="Ensembl"/>
</dbReference>
<dbReference type="GO" id="GO:0001764">
    <property type="term" value="P:neuron migration"/>
    <property type="evidence" value="ECO:0007669"/>
    <property type="project" value="Ensembl"/>
</dbReference>
<dbReference type="GO" id="GO:0038026">
    <property type="term" value="P:reelin-mediated signaling pathway"/>
    <property type="evidence" value="ECO:0000250"/>
    <property type="project" value="UniProtKB"/>
</dbReference>
<dbReference type="CDD" id="cd00200">
    <property type="entry name" value="WD40"/>
    <property type="match status" value="1"/>
</dbReference>
<dbReference type="FunFam" id="2.130.10.10:FF:000038">
    <property type="entry name" value="Lissencephaly-1 homolog B"/>
    <property type="match status" value="1"/>
</dbReference>
<dbReference type="FunFam" id="1.20.960.30:FF:000002">
    <property type="entry name" value="Platelet-activating factor acetylhydrolase ib"/>
    <property type="match status" value="1"/>
</dbReference>
<dbReference type="Gene3D" id="1.20.960.30">
    <property type="match status" value="1"/>
</dbReference>
<dbReference type="Gene3D" id="2.130.10.10">
    <property type="entry name" value="YVTN repeat-like/Quinoprotein amine dehydrogenase"/>
    <property type="match status" value="1"/>
</dbReference>
<dbReference type="HAMAP" id="MF_03141">
    <property type="entry name" value="lis1"/>
    <property type="match status" value="1"/>
</dbReference>
<dbReference type="InterPro" id="IPR017252">
    <property type="entry name" value="Dynein_regulator_LIS1"/>
</dbReference>
<dbReference type="InterPro" id="IPR020472">
    <property type="entry name" value="G-protein_beta_WD-40_rep"/>
</dbReference>
<dbReference type="InterPro" id="IPR037190">
    <property type="entry name" value="LIS1_N"/>
</dbReference>
<dbReference type="InterPro" id="IPR006594">
    <property type="entry name" value="LisH"/>
</dbReference>
<dbReference type="InterPro" id="IPR056795">
    <property type="entry name" value="PAC1-like_LisH-like_dom"/>
</dbReference>
<dbReference type="InterPro" id="IPR015943">
    <property type="entry name" value="WD40/YVTN_repeat-like_dom_sf"/>
</dbReference>
<dbReference type="InterPro" id="IPR019775">
    <property type="entry name" value="WD40_repeat_CS"/>
</dbReference>
<dbReference type="InterPro" id="IPR036322">
    <property type="entry name" value="WD40_repeat_dom_sf"/>
</dbReference>
<dbReference type="InterPro" id="IPR001680">
    <property type="entry name" value="WD40_rpt"/>
</dbReference>
<dbReference type="InterPro" id="IPR050349">
    <property type="entry name" value="WD_LIS1/nudF_dynein_reg"/>
</dbReference>
<dbReference type="PANTHER" id="PTHR44129">
    <property type="entry name" value="WD REPEAT-CONTAINING PROTEIN POP1"/>
    <property type="match status" value="1"/>
</dbReference>
<dbReference type="Pfam" id="PF24951">
    <property type="entry name" value="LisH_PAC1"/>
    <property type="match status" value="1"/>
</dbReference>
<dbReference type="Pfam" id="PF00400">
    <property type="entry name" value="WD40"/>
    <property type="match status" value="7"/>
</dbReference>
<dbReference type="PIRSF" id="PIRSF037647">
    <property type="entry name" value="Dynein_regulator_Lis1"/>
    <property type="match status" value="1"/>
</dbReference>
<dbReference type="PRINTS" id="PR00320">
    <property type="entry name" value="GPROTEINBRPT"/>
</dbReference>
<dbReference type="SMART" id="SM00667">
    <property type="entry name" value="LisH"/>
    <property type="match status" value="1"/>
</dbReference>
<dbReference type="SMART" id="SM00320">
    <property type="entry name" value="WD40"/>
    <property type="match status" value="7"/>
</dbReference>
<dbReference type="SUPFAM" id="SSF109925">
    <property type="entry name" value="Lissencephaly-1 protein (Lis-1, PAF-AH alpha) N-terminal domain"/>
    <property type="match status" value="1"/>
</dbReference>
<dbReference type="SUPFAM" id="SSF50978">
    <property type="entry name" value="WD40 repeat-like"/>
    <property type="match status" value="1"/>
</dbReference>
<dbReference type="PROSITE" id="PS50896">
    <property type="entry name" value="LISH"/>
    <property type="match status" value="1"/>
</dbReference>
<dbReference type="PROSITE" id="PS00678">
    <property type="entry name" value="WD_REPEATS_1"/>
    <property type="match status" value="4"/>
</dbReference>
<dbReference type="PROSITE" id="PS50082">
    <property type="entry name" value="WD_REPEATS_2"/>
    <property type="match status" value="7"/>
</dbReference>
<dbReference type="PROSITE" id="PS50294">
    <property type="entry name" value="WD_REPEATS_REGION"/>
    <property type="match status" value="1"/>
</dbReference>
<keyword id="KW-0007">Acetylation</keyword>
<keyword id="KW-0131">Cell cycle</keyword>
<keyword id="KW-0132">Cell division</keyword>
<keyword id="KW-0175">Coiled coil</keyword>
<keyword id="KW-0963">Cytoplasm</keyword>
<keyword id="KW-0206">Cytoskeleton</keyword>
<keyword id="KW-0217">Developmental protein</keyword>
<keyword id="KW-0221">Differentiation</keyword>
<keyword id="KW-0442">Lipid degradation</keyword>
<keyword id="KW-0443">Lipid metabolism</keyword>
<keyword id="KW-0472">Membrane</keyword>
<keyword id="KW-0493">Microtubule</keyword>
<keyword id="KW-0498">Mitosis</keyword>
<keyword id="KW-0524">Neurogenesis</keyword>
<keyword id="KW-0539">Nucleus</keyword>
<keyword id="KW-0597">Phosphoprotein</keyword>
<keyword id="KW-1185">Reference proteome</keyword>
<keyword id="KW-0677">Repeat</keyword>
<keyword id="KW-0813">Transport</keyword>
<keyword id="KW-0853">WD repeat</keyword>
<protein>
    <recommendedName>
        <fullName evidence="2 7">Platelet-activating factor acetylhydrolase IB subunit alpha</fullName>
    </recommendedName>
    <alternativeName>
        <fullName evidence="7">Lissencephaly-1 protein</fullName>
        <shortName evidence="7">LIS-1</shortName>
    </alternativeName>
    <alternativeName>
        <fullName evidence="7">PAF acetylhydrolase 45 kDa subunit</fullName>
        <shortName evidence="7">PAF-AH 45 kDa subunit</shortName>
    </alternativeName>
    <alternativeName>
        <fullName evidence="7">PAF-AH alpha</fullName>
        <shortName evidence="7">PAFAH alpha</shortName>
    </alternativeName>
</protein>